<proteinExistence type="evidence at protein level"/>
<keyword id="KW-0002">3D-structure</keyword>
<keyword id="KW-0217">Developmental protein</keyword>
<keyword id="KW-1015">Disulfide bond</keyword>
<keyword id="KW-0272">Extracellular matrix</keyword>
<keyword id="KW-0325">Glycoprotein</keyword>
<keyword id="KW-0449">Lipoprotein</keyword>
<keyword id="KW-1185">Reference proteome</keyword>
<keyword id="KW-0964">Secreted</keyword>
<keyword id="KW-0732">Signal</keyword>
<keyword id="KW-0879">Wnt signaling pathway</keyword>
<organism>
    <name type="scientific">Xenopus laevis</name>
    <name type="common">African clawed frog</name>
    <dbReference type="NCBI Taxonomy" id="8355"/>
    <lineage>
        <taxon>Eukaryota</taxon>
        <taxon>Metazoa</taxon>
        <taxon>Chordata</taxon>
        <taxon>Craniata</taxon>
        <taxon>Vertebrata</taxon>
        <taxon>Euteleostomi</taxon>
        <taxon>Amphibia</taxon>
        <taxon>Batrachia</taxon>
        <taxon>Anura</taxon>
        <taxon>Pipoidea</taxon>
        <taxon>Pipidae</taxon>
        <taxon>Xenopodinae</taxon>
        <taxon>Xenopus</taxon>
        <taxon>Xenopus</taxon>
    </lineage>
</organism>
<feature type="signal peptide" evidence="2">
    <location>
        <begin position="1"/>
        <end position="22"/>
    </location>
</feature>
<feature type="chain" id="PRO_0000041447" description="Protein Wnt-8">
    <location>
        <begin position="23"/>
        <end position="358"/>
    </location>
</feature>
<feature type="site" description="Cleavage; by tiki1 and tiki2" evidence="5">
    <location>
        <begin position="39"/>
        <end position="40"/>
    </location>
</feature>
<feature type="site" description="Cleavage; by tiki1 and tiki2" evidence="5">
    <location>
        <begin position="42"/>
        <end position="43"/>
    </location>
</feature>
<feature type="lipid moiety-binding region" description="O-palmitoleoyl serine" evidence="4">
    <location>
        <position position="187"/>
    </location>
</feature>
<feature type="glycosylation site" description="N-linked (GlcNAc...) asparagine" evidence="4 8">
    <location>
        <position position="104"/>
    </location>
</feature>
<feature type="glycosylation site" description="N-linked (GlcNAc...) asparagine" evidence="4 8">
    <location>
        <position position="263"/>
    </location>
</feature>
<feature type="glycosylation site" description="N-linked (GlcNAc...) asparagine" evidence="2">
    <location>
        <position position="282"/>
    </location>
</feature>
<feature type="disulfide bond" evidence="4 8">
    <location>
        <begin position="55"/>
        <end position="66"/>
    </location>
</feature>
<feature type="disulfide bond" evidence="4 8">
    <location>
        <begin position="105"/>
        <end position="113"/>
    </location>
</feature>
<feature type="disulfide bond" evidence="4 8">
    <location>
        <begin position="115"/>
        <end position="133"/>
    </location>
</feature>
<feature type="disulfide bond" evidence="4 8">
    <location>
        <begin position="181"/>
        <end position="195"/>
    </location>
</feature>
<feature type="disulfide bond" evidence="4 8">
    <location>
        <begin position="183"/>
        <end position="190"/>
    </location>
</feature>
<feature type="disulfide bond" evidence="4 8">
    <location>
        <begin position="260"/>
        <end position="298"/>
    </location>
</feature>
<feature type="disulfide bond" evidence="4 8">
    <location>
        <begin position="276"/>
        <end position="291"/>
    </location>
</feature>
<feature type="disulfide bond" evidence="4 8">
    <location>
        <begin position="295"/>
        <end position="337"/>
    </location>
</feature>
<feature type="disulfide bond" evidence="4 8">
    <location>
        <begin position="313"/>
        <end position="328"/>
    </location>
</feature>
<feature type="disulfide bond" evidence="4 8">
    <location>
        <begin position="315"/>
        <end position="325"/>
    </location>
</feature>
<feature type="disulfide bond" evidence="4 8">
    <location>
        <begin position="320"/>
        <end position="321"/>
    </location>
</feature>
<feature type="sequence conflict" description="In Ref. 3; AAA50012." evidence="7" ref="3">
    <original>S</original>
    <variation>T</variation>
    <location>
        <position position="243"/>
    </location>
</feature>
<feature type="sequence conflict" description="In Ref. 3; AAA50012." evidence="7" ref="3">
    <original>K</original>
    <variation>R</variation>
    <location>
        <position position="292"/>
    </location>
</feature>
<feature type="helix" evidence="9">
    <location>
        <begin position="34"/>
        <end position="58"/>
    </location>
</feature>
<feature type="turn" evidence="9">
    <location>
        <begin position="59"/>
        <end position="61"/>
    </location>
</feature>
<feature type="strand" evidence="9">
    <location>
        <begin position="62"/>
        <end position="64"/>
    </location>
</feature>
<feature type="helix" evidence="9">
    <location>
        <begin position="72"/>
        <end position="75"/>
    </location>
</feature>
<feature type="helix" evidence="9">
    <location>
        <begin position="84"/>
        <end position="106"/>
    </location>
</feature>
<feature type="turn" evidence="9">
    <location>
        <begin position="107"/>
        <end position="109"/>
    </location>
</feature>
<feature type="turn" evidence="9">
    <location>
        <begin position="118"/>
        <end position="121"/>
    </location>
</feature>
<feature type="strand" evidence="9">
    <location>
        <begin position="122"/>
        <end position="125"/>
    </location>
</feature>
<feature type="strand" evidence="9">
    <location>
        <begin position="128"/>
        <end position="130"/>
    </location>
</feature>
<feature type="helix" evidence="9">
    <location>
        <begin position="137"/>
        <end position="151"/>
    </location>
</feature>
<feature type="strand" evidence="9">
    <location>
        <begin position="154"/>
        <end position="156"/>
    </location>
</feature>
<feature type="helix" evidence="9">
    <location>
        <begin position="157"/>
        <end position="175"/>
    </location>
</feature>
<feature type="strand" evidence="9">
    <location>
        <begin position="178"/>
        <end position="183"/>
    </location>
</feature>
<feature type="helix" evidence="9">
    <location>
        <begin position="186"/>
        <end position="188"/>
    </location>
</feature>
<feature type="strand" evidence="9">
    <location>
        <begin position="192"/>
        <end position="198"/>
    </location>
</feature>
<feature type="helix" evidence="9">
    <location>
        <begin position="202"/>
        <end position="214"/>
    </location>
</feature>
<feature type="helix" evidence="9">
    <location>
        <begin position="236"/>
        <end position="243"/>
    </location>
</feature>
<feature type="strand" evidence="9">
    <location>
        <begin position="247"/>
        <end position="249"/>
    </location>
</feature>
<feature type="strand" evidence="9">
    <location>
        <begin position="261"/>
        <end position="263"/>
    </location>
</feature>
<feature type="turn" evidence="9">
    <location>
        <begin position="264"/>
        <end position="267"/>
    </location>
</feature>
<feature type="helix" evidence="9">
    <location>
        <begin position="285"/>
        <end position="288"/>
    </location>
</feature>
<feature type="helix" evidence="9">
    <location>
        <begin position="290"/>
        <end position="294"/>
    </location>
</feature>
<feature type="helix" evidence="9">
    <location>
        <begin position="296"/>
        <end position="298"/>
    </location>
</feature>
<feature type="strand" evidence="9">
    <location>
        <begin position="301"/>
        <end position="312"/>
    </location>
</feature>
<feature type="strand" evidence="9">
    <location>
        <begin position="319"/>
        <end position="321"/>
    </location>
</feature>
<feature type="strand" evidence="9">
    <location>
        <begin position="327"/>
        <end position="338"/>
    </location>
</feature>
<comment type="function">
    <text evidence="6">Ligand for members of the frizzled family of seven transmembrane receptors. Plays a role in ventral mesodermal patterning during embryogenesis. Mimics Nieuwkoop center activity. Causes dorsal mesodermal differentiation of animal cap ectoderm when coexpressed with noggin and nuclear, sequence-specific DNA-binding protein xBra. None of these molecules causes dorsal mesoderm formation when expressed alone.</text>
</comment>
<comment type="subunit">
    <text evidence="3 4 5">Homooligomer; disulfide-linked, leading to inactivation. Interacts with the long chain of cer1.</text>
</comment>
<comment type="interaction">
    <interactant intactId="EBI-6257743">
        <id>P28026</id>
    </interactant>
    <interactant intactId="EBI-7036323">
        <id>Q6PA07</id>
        <label>ptk7.L</label>
    </interactant>
    <organismsDiffer>false</organismsDiffer>
    <experiments>2</experiments>
</comment>
<comment type="interaction">
    <interactant intactId="EBI-6257743">
        <id>P28026</id>
    </interactant>
    <interactant intactId="EBI-6171689">
        <id>Q61091</id>
        <label>Fzd8</label>
    </interactant>
    <organismsDiffer>true</organismsDiffer>
    <experiments>3</experiments>
</comment>
<comment type="subcellular location">
    <subcellularLocation>
        <location>Secreted</location>
        <location>Extracellular space</location>
        <location>Extracellular matrix</location>
    </subcellularLocation>
</comment>
<comment type="developmental stage">
    <text>Mid-blastula, decline by tailbud.</text>
</comment>
<comment type="PTM">
    <text evidence="1 4">Palmitoleoylation is required for efficient binding to frizzled receptors (PubMed:22653731). Depalmitoleoylation leads to Wnt signaling pathway inhibition (By similarity).</text>
</comment>
<comment type="PTM">
    <text evidence="5">Proteolytic processing by tiki1 and tiki2 promotes oxidation and formation of large disulfide-bond oligomers, leading to inactivation of wnt8.</text>
</comment>
<comment type="similarity">
    <text evidence="7">Belongs to the Wnt family.</text>
</comment>
<comment type="sequence caution" evidence="7">
    <conflict type="miscellaneous discrepancy">
        <sequence resource="EMBL-CDS" id="AAA50012"/>
    </conflict>
</comment>
<name>WNT8_XENLA</name>
<gene>
    <name type="primary">wnt8</name>
</gene>
<protein>
    <recommendedName>
        <fullName>Protein Wnt-8</fullName>
        <shortName>XWnt-8</shortName>
    </recommendedName>
</protein>
<evidence type="ECO:0000250" key="1">
    <source>
        <dbReference type="UniProtKB" id="P56704"/>
    </source>
</evidence>
<evidence type="ECO:0000255" key="2"/>
<evidence type="ECO:0000269" key="3">
    <source>
    </source>
</evidence>
<evidence type="ECO:0000269" key="4">
    <source>
    </source>
</evidence>
<evidence type="ECO:0000269" key="5">
    <source>
    </source>
</evidence>
<evidence type="ECO:0000269" key="6">
    <source>
    </source>
</evidence>
<evidence type="ECO:0000305" key="7"/>
<evidence type="ECO:0007744" key="8">
    <source>
        <dbReference type="PDB" id="4F0A"/>
    </source>
</evidence>
<evidence type="ECO:0007829" key="9">
    <source>
        <dbReference type="PDB" id="4F0A"/>
    </source>
</evidence>
<reference key="1">
    <citation type="journal article" date="1991" name="Development">
        <title>Xwnt-8, a Xenopus Wnt-1/int-1-related gene responsive to mesoderm-inducing growth factors, may play a role in ventral mesodermal patterning during embryogenesis.</title>
        <authorList>
            <person name="Christian J.L."/>
            <person name="McMahon J.A."/>
            <person name="McMahon A.P."/>
            <person name="Moon R.T."/>
        </authorList>
    </citation>
    <scope>NUCLEOTIDE SEQUENCE [MRNA]</scope>
    <source>
        <tissue>Neurula</tissue>
    </source>
</reference>
<reference key="2">
    <citation type="journal article" date="1995" name="Development">
        <title>Xwnt-8b: a maternally expressed Xenopus Wnt gene with a potential role in establishing the dorsoventral axis.</title>
        <authorList>
            <person name="Cui Y."/>
            <person name="Brown J.D."/>
            <person name="Moon R.T."/>
            <person name="Christian J.L."/>
        </authorList>
    </citation>
    <scope>SEQUENCE REVISION TO C-TERMINUS</scope>
</reference>
<reference key="3">
    <citation type="journal article" date="1991" name="Dev. Biol.">
        <title>Isolation of cDNAs partially encoding four Xenopus Wnt-1/int-1-related proteins and characterization of their transient expression during embryonic development.</title>
        <authorList>
            <person name="Christian J.L."/>
            <person name="Gavin B.J."/>
            <person name="McMahon A.P."/>
            <person name="Moon R.T."/>
        </authorList>
    </citation>
    <scope>NUCLEOTIDE SEQUENCE [MRNA] OF 181-321</scope>
    <source>
        <tissue>Neurula</tissue>
    </source>
</reference>
<reference key="4">
    <citation type="journal article" date="1994" name="EMBO J.">
        <title>Specification of mesodermal pattern in Xenopus laevis by interactions between Brachyury, noggin and Xwnt-8.</title>
        <authorList>
            <person name="Cunliffe V."/>
            <person name="Smith J.C."/>
        </authorList>
    </citation>
    <scope>FUNCTION</scope>
</reference>
<reference key="5">
    <citation type="journal article" date="1999" name="Nature">
        <title>The head inducer Cerberus is a multifunctional antagonist of Nodal, BMP and Wnt signals.</title>
        <authorList>
            <person name="Piccolo S."/>
            <person name="Agius E."/>
            <person name="Leyns L."/>
            <person name="Bhattacharyya S."/>
            <person name="Grunz H."/>
            <person name="Bouwmeester T."/>
            <person name="De Robertis E.M."/>
        </authorList>
    </citation>
    <scope>INTERACTION WITH CER1</scope>
</reference>
<reference key="6">
    <citation type="journal article" date="2012" name="Cell">
        <title>Tiki1 is required for head formation via Wnt cleavage-oxidation and inactivation.</title>
        <authorList>
            <person name="Zhang X."/>
            <person name="Abreu J.G."/>
            <person name="Yokota C."/>
            <person name="Macdonald B.T."/>
            <person name="Singh S."/>
            <person name="Coburn K.L."/>
            <person name="Cheong S.M."/>
            <person name="Zhang M.M."/>
            <person name="Ye Q.Z."/>
            <person name="Hang H.C."/>
            <person name="Steen H."/>
            <person name="He X."/>
        </authorList>
    </citation>
    <scope>PROTEOLYTIC PROCESSING BY TIKI1 AND TIKI2</scope>
    <scope>SUBUNIT</scope>
</reference>
<reference key="7">
    <citation type="journal article" date="2012" name="Science">
        <title>Structural basis of Wnt recognition by Frizzled.</title>
        <authorList>
            <person name="Janda C.Y."/>
            <person name="Waghray D."/>
            <person name="Levin A.M."/>
            <person name="Thomas C."/>
            <person name="Garcia K.C."/>
        </authorList>
    </citation>
    <scope>X-RAY CRYSTALLOGRAPHY (3.25 ANGSTROMS) OF 23-338 IN COMPLEX WITH MOUSE FZD8</scope>
    <scope>GLYCOSYLATION AT ASN-104 AND ASN-263</scope>
    <scope>PALMITOLEOYLATION AT SER-187</scope>
    <scope>DISULFIDE BONDS</scope>
</reference>
<sequence length="358" mass="40176">MQNTTLFILATLLIFCPFFTASAWSVNNFLMTGPKAYLTYSASVAVGAQNGIEECKYQFAWERWNCPESTLQLATHNGLRSATRETSFVHAISSAGVMYTLTRNCSMGDFDNCGCDDSRNGRIGGRGWVWGGCSDNAEFGERISKLFVDGLETGQDARALMNLHNNEAGRLAVKETMKRTCKCHGISGSCSIQTCWLQLAEFRDIGNHLKIKHDQALKLEMDKRKMRSGNSADNRGAIADAFSSVAGSELIFLEDSPDYCLKNISLGLQGTEGRECLQSGKNLSQWERRSCKRLCTDCGLRVEEKKTEIISSCNCKFHWCCTVKCEQCKQVVIKHFCARRERDSNMLNTKRKNRGHRR</sequence>
<accession>P28026</accession>
<dbReference type="EMBL" id="X57234">
    <property type="protein sequence ID" value="CAA40510.1"/>
    <property type="molecule type" value="mRNA"/>
</dbReference>
<dbReference type="EMBL" id="M55058">
    <property type="protein sequence ID" value="AAA50012.1"/>
    <property type="status" value="ALT_SEQ"/>
    <property type="molecule type" value="mRNA"/>
</dbReference>
<dbReference type="PIR" id="S18771">
    <property type="entry name" value="S18771"/>
</dbReference>
<dbReference type="RefSeq" id="NP_001081637.1">
    <property type="nucleotide sequence ID" value="NM_001088168.1"/>
</dbReference>
<dbReference type="PDB" id="4F0A">
    <property type="method" value="X-ray"/>
    <property type="resolution" value="3.25 A"/>
    <property type="chains" value="B=23-338"/>
</dbReference>
<dbReference type="PDB" id="8CTG">
    <property type="method" value="EM"/>
    <property type="resolution" value="3.80 A"/>
    <property type="chains" value="B=22-329"/>
</dbReference>
<dbReference type="PDBsum" id="4F0A"/>
<dbReference type="PDBsum" id="8CTG"/>
<dbReference type="EMDB" id="EMD-26989"/>
<dbReference type="SMR" id="P28026"/>
<dbReference type="BioGRID" id="99305">
    <property type="interactions" value="1"/>
</dbReference>
<dbReference type="IntAct" id="P28026">
    <property type="interactions" value="3"/>
</dbReference>
<dbReference type="MINT" id="P28026"/>
<dbReference type="GlyCosmos" id="P28026">
    <property type="glycosylation" value="3 sites, No reported glycans"/>
</dbReference>
<dbReference type="iPTMnet" id="P28026"/>
<dbReference type="DNASU" id="397970"/>
<dbReference type="GeneID" id="397970"/>
<dbReference type="KEGG" id="xla:397970"/>
<dbReference type="AGR" id="Xenbase:XB-GENE-866281"/>
<dbReference type="CTD" id="397970"/>
<dbReference type="Xenbase" id="XB-GENE-866281">
    <property type="gene designation" value="wnt8a.L"/>
</dbReference>
<dbReference type="OrthoDB" id="5945655at2759"/>
<dbReference type="EvolutionaryTrace" id="P28026"/>
<dbReference type="Proteomes" id="UP000186698">
    <property type="component" value="Chromosome 3L"/>
</dbReference>
<dbReference type="Bgee" id="397970">
    <property type="expression patterns" value="Expressed in gastrula and 3 other cell types or tissues"/>
</dbReference>
<dbReference type="GO" id="GO:0062023">
    <property type="term" value="C:collagen-containing extracellular matrix"/>
    <property type="evidence" value="ECO:0000314"/>
    <property type="project" value="BHF-UCL"/>
</dbReference>
<dbReference type="GO" id="GO:0005576">
    <property type="term" value="C:extracellular region"/>
    <property type="evidence" value="ECO:0000304"/>
    <property type="project" value="Reactome"/>
</dbReference>
<dbReference type="GO" id="GO:0005615">
    <property type="term" value="C:extracellular space"/>
    <property type="evidence" value="ECO:0000318"/>
    <property type="project" value="GO_Central"/>
</dbReference>
<dbReference type="GO" id="GO:0005125">
    <property type="term" value="F:cytokine activity"/>
    <property type="evidence" value="ECO:0000318"/>
    <property type="project" value="GO_Central"/>
</dbReference>
<dbReference type="GO" id="GO:0005109">
    <property type="term" value="F:frizzled binding"/>
    <property type="evidence" value="ECO:0000353"/>
    <property type="project" value="ParkinsonsUK-UCL"/>
</dbReference>
<dbReference type="GO" id="GO:0002020">
    <property type="term" value="F:protease binding"/>
    <property type="evidence" value="ECO:0000353"/>
    <property type="project" value="ParkinsonsUK-UCL"/>
</dbReference>
<dbReference type="GO" id="GO:0009948">
    <property type="term" value="P:anterior/posterior axis specification"/>
    <property type="evidence" value="ECO:0000315"/>
    <property type="project" value="BHF-UCL"/>
</dbReference>
<dbReference type="GO" id="GO:0060070">
    <property type="term" value="P:canonical Wnt signaling pathway"/>
    <property type="evidence" value="ECO:0000314"/>
    <property type="project" value="BHF-UCL"/>
</dbReference>
<dbReference type="GO" id="GO:0045165">
    <property type="term" value="P:cell fate commitment"/>
    <property type="evidence" value="ECO:0000318"/>
    <property type="project" value="GO_Central"/>
</dbReference>
<dbReference type="GO" id="GO:0000578">
    <property type="term" value="P:embryonic axis specification"/>
    <property type="evidence" value="ECO:0000315"/>
    <property type="project" value="BHF-UCL"/>
</dbReference>
<dbReference type="GO" id="GO:0060322">
    <property type="term" value="P:head development"/>
    <property type="evidence" value="ECO:0000304"/>
    <property type="project" value="Xenbase"/>
</dbReference>
<dbReference type="GO" id="GO:0007498">
    <property type="term" value="P:mesoderm development"/>
    <property type="evidence" value="ECO:0000314"/>
    <property type="project" value="Xenbase"/>
</dbReference>
<dbReference type="GO" id="GO:2000044">
    <property type="term" value="P:negative regulation of cardiac cell fate specification"/>
    <property type="evidence" value="ECO:0000315"/>
    <property type="project" value="BHF-UCL"/>
</dbReference>
<dbReference type="GO" id="GO:0014034">
    <property type="term" value="P:neural crest cell fate commitment"/>
    <property type="evidence" value="ECO:0000315"/>
    <property type="project" value="BHF-UCL"/>
</dbReference>
<dbReference type="GO" id="GO:0030182">
    <property type="term" value="P:neuron differentiation"/>
    <property type="evidence" value="ECO:0000318"/>
    <property type="project" value="GO_Central"/>
</dbReference>
<dbReference type="GO" id="GO:0045944">
    <property type="term" value="P:positive regulation of transcription by RNA polymerase II"/>
    <property type="evidence" value="ECO:0000314"/>
    <property type="project" value="BHF-UCL"/>
</dbReference>
<dbReference type="GO" id="GO:0060061">
    <property type="term" value="P:Spemann organizer formation"/>
    <property type="evidence" value="ECO:0000315"/>
    <property type="project" value="BHF-UCL"/>
</dbReference>
<dbReference type="GO" id="GO:0016055">
    <property type="term" value="P:Wnt signaling pathway"/>
    <property type="evidence" value="ECO:0000314"/>
    <property type="project" value="BHF-UCL"/>
</dbReference>
<dbReference type="CDD" id="cd19351">
    <property type="entry name" value="Wnt_Wnt8a"/>
    <property type="match status" value="1"/>
</dbReference>
<dbReference type="FunFam" id="3.30.2460.20:FF:000003">
    <property type="entry name" value="Protein Wnt"/>
    <property type="match status" value="1"/>
</dbReference>
<dbReference type="Gene3D" id="3.30.2460.20">
    <property type="match status" value="1"/>
</dbReference>
<dbReference type="InterPro" id="IPR034312">
    <property type="entry name" value="Protein_Wnt-8A/8C"/>
</dbReference>
<dbReference type="InterPro" id="IPR005817">
    <property type="entry name" value="Wnt"/>
</dbReference>
<dbReference type="InterPro" id="IPR013301">
    <property type="entry name" value="Wnt8"/>
</dbReference>
<dbReference type="InterPro" id="IPR043158">
    <property type="entry name" value="Wnt_C"/>
</dbReference>
<dbReference type="InterPro" id="IPR018161">
    <property type="entry name" value="Wnt_CS"/>
</dbReference>
<dbReference type="PANTHER" id="PTHR12027:SF92">
    <property type="entry name" value="PROTEIN WNT-8A"/>
    <property type="match status" value="1"/>
</dbReference>
<dbReference type="PANTHER" id="PTHR12027">
    <property type="entry name" value="WNT RELATED"/>
    <property type="match status" value="1"/>
</dbReference>
<dbReference type="Pfam" id="PF00110">
    <property type="entry name" value="wnt"/>
    <property type="match status" value="1"/>
</dbReference>
<dbReference type="PRINTS" id="PR01892">
    <property type="entry name" value="WNT8PROTEIN"/>
</dbReference>
<dbReference type="PRINTS" id="PR01349">
    <property type="entry name" value="WNTPROTEIN"/>
</dbReference>
<dbReference type="SMART" id="SM00097">
    <property type="entry name" value="WNT1"/>
    <property type="match status" value="1"/>
</dbReference>
<dbReference type="PROSITE" id="PS00246">
    <property type="entry name" value="WNT1"/>
    <property type="match status" value="1"/>
</dbReference>